<dbReference type="EC" id="6.1.1.15" evidence="1"/>
<dbReference type="EMBL" id="CP000680">
    <property type="protein sequence ID" value="ABP84023.1"/>
    <property type="molecule type" value="Genomic_DNA"/>
</dbReference>
<dbReference type="SMR" id="A4XRQ7"/>
<dbReference type="STRING" id="399739.Pmen_1258"/>
<dbReference type="KEGG" id="pmy:Pmen_1258"/>
<dbReference type="PATRIC" id="fig|399739.8.peg.1272"/>
<dbReference type="eggNOG" id="COG0442">
    <property type="taxonomic scope" value="Bacteria"/>
</dbReference>
<dbReference type="HOGENOM" id="CLU_016739_0_0_6"/>
<dbReference type="OrthoDB" id="9809052at2"/>
<dbReference type="GO" id="GO:0005829">
    <property type="term" value="C:cytosol"/>
    <property type="evidence" value="ECO:0007669"/>
    <property type="project" value="TreeGrafter"/>
</dbReference>
<dbReference type="GO" id="GO:0002161">
    <property type="term" value="F:aminoacyl-tRNA deacylase activity"/>
    <property type="evidence" value="ECO:0007669"/>
    <property type="project" value="InterPro"/>
</dbReference>
<dbReference type="GO" id="GO:0005524">
    <property type="term" value="F:ATP binding"/>
    <property type="evidence" value="ECO:0007669"/>
    <property type="project" value="UniProtKB-UniRule"/>
</dbReference>
<dbReference type="GO" id="GO:0004827">
    <property type="term" value="F:proline-tRNA ligase activity"/>
    <property type="evidence" value="ECO:0007669"/>
    <property type="project" value="UniProtKB-UniRule"/>
</dbReference>
<dbReference type="GO" id="GO:0006433">
    <property type="term" value="P:prolyl-tRNA aminoacylation"/>
    <property type="evidence" value="ECO:0007669"/>
    <property type="project" value="UniProtKB-UniRule"/>
</dbReference>
<dbReference type="CDD" id="cd04334">
    <property type="entry name" value="ProRS-INS"/>
    <property type="match status" value="1"/>
</dbReference>
<dbReference type="CDD" id="cd00861">
    <property type="entry name" value="ProRS_anticodon_short"/>
    <property type="match status" value="1"/>
</dbReference>
<dbReference type="CDD" id="cd00779">
    <property type="entry name" value="ProRS_core_prok"/>
    <property type="match status" value="1"/>
</dbReference>
<dbReference type="FunFam" id="3.30.930.10:FF:000043">
    <property type="entry name" value="Proline--tRNA ligase"/>
    <property type="match status" value="1"/>
</dbReference>
<dbReference type="FunFam" id="3.30.930.10:FF:000097">
    <property type="entry name" value="Proline--tRNA ligase"/>
    <property type="match status" value="1"/>
</dbReference>
<dbReference type="FunFam" id="3.90.960.10:FF:000001">
    <property type="entry name" value="Proline--tRNA ligase"/>
    <property type="match status" value="1"/>
</dbReference>
<dbReference type="Gene3D" id="3.40.50.800">
    <property type="entry name" value="Anticodon-binding domain"/>
    <property type="match status" value="1"/>
</dbReference>
<dbReference type="Gene3D" id="3.30.930.10">
    <property type="entry name" value="Bira Bifunctional Protein, Domain 2"/>
    <property type="match status" value="2"/>
</dbReference>
<dbReference type="Gene3D" id="3.90.960.10">
    <property type="entry name" value="YbaK/aminoacyl-tRNA synthetase-associated domain"/>
    <property type="match status" value="1"/>
</dbReference>
<dbReference type="HAMAP" id="MF_01569">
    <property type="entry name" value="Pro_tRNA_synth_type1"/>
    <property type="match status" value="1"/>
</dbReference>
<dbReference type="InterPro" id="IPR002314">
    <property type="entry name" value="aa-tRNA-synt_IIb"/>
</dbReference>
<dbReference type="InterPro" id="IPR006195">
    <property type="entry name" value="aa-tRNA-synth_II"/>
</dbReference>
<dbReference type="InterPro" id="IPR045864">
    <property type="entry name" value="aa-tRNA-synth_II/BPL/LPL"/>
</dbReference>
<dbReference type="InterPro" id="IPR004154">
    <property type="entry name" value="Anticodon-bd"/>
</dbReference>
<dbReference type="InterPro" id="IPR036621">
    <property type="entry name" value="Anticodon-bd_dom_sf"/>
</dbReference>
<dbReference type="InterPro" id="IPR002316">
    <property type="entry name" value="Pro-tRNA-ligase_IIa"/>
</dbReference>
<dbReference type="InterPro" id="IPR004500">
    <property type="entry name" value="Pro-tRNA-synth_IIa_bac-type"/>
</dbReference>
<dbReference type="InterPro" id="IPR023717">
    <property type="entry name" value="Pro-tRNA-Synthase_IIa_type1"/>
</dbReference>
<dbReference type="InterPro" id="IPR050062">
    <property type="entry name" value="Pro-tRNA_synthetase"/>
</dbReference>
<dbReference type="InterPro" id="IPR044140">
    <property type="entry name" value="ProRS_anticodon_short"/>
</dbReference>
<dbReference type="InterPro" id="IPR033730">
    <property type="entry name" value="ProRS_core_prok"/>
</dbReference>
<dbReference type="InterPro" id="IPR036754">
    <property type="entry name" value="YbaK/aa-tRNA-synt-asso_dom_sf"/>
</dbReference>
<dbReference type="InterPro" id="IPR007214">
    <property type="entry name" value="YbaK/aa-tRNA-synth-assoc-dom"/>
</dbReference>
<dbReference type="NCBIfam" id="NF006625">
    <property type="entry name" value="PRK09194.1"/>
    <property type="match status" value="1"/>
</dbReference>
<dbReference type="NCBIfam" id="TIGR00409">
    <property type="entry name" value="proS_fam_II"/>
    <property type="match status" value="1"/>
</dbReference>
<dbReference type="PANTHER" id="PTHR42753">
    <property type="entry name" value="MITOCHONDRIAL RIBOSOME PROTEIN L39/PROLYL-TRNA LIGASE FAMILY MEMBER"/>
    <property type="match status" value="1"/>
</dbReference>
<dbReference type="PANTHER" id="PTHR42753:SF2">
    <property type="entry name" value="PROLINE--TRNA LIGASE"/>
    <property type="match status" value="1"/>
</dbReference>
<dbReference type="Pfam" id="PF03129">
    <property type="entry name" value="HGTP_anticodon"/>
    <property type="match status" value="1"/>
</dbReference>
<dbReference type="Pfam" id="PF00587">
    <property type="entry name" value="tRNA-synt_2b"/>
    <property type="match status" value="1"/>
</dbReference>
<dbReference type="Pfam" id="PF04073">
    <property type="entry name" value="tRNA_edit"/>
    <property type="match status" value="1"/>
</dbReference>
<dbReference type="PIRSF" id="PIRSF001535">
    <property type="entry name" value="ProRS_1"/>
    <property type="match status" value="1"/>
</dbReference>
<dbReference type="PRINTS" id="PR01046">
    <property type="entry name" value="TRNASYNTHPRO"/>
</dbReference>
<dbReference type="SUPFAM" id="SSF52954">
    <property type="entry name" value="Class II aaRS ABD-related"/>
    <property type="match status" value="1"/>
</dbReference>
<dbReference type="SUPFAM" id="SSF55681">
    <property type="entry name" value="Class II aaRS and biotin synthetases"/>
    <property type="match status" value="1"/>
</dbReference>
<dbReference type="SUPFAM" id="SSF55826">
    <property type="entry name" value="YbaK/ProRS associated domain"/>
    <property type="match status" value="1"/>
</dbReference>
<dbReference type="PROSITE" id="PS50862">
    <property type="entry name" value="AA_TRNA_LIGASE_II"/>
    <property type="match status" value="1"/>
</dbReference>
<sequence>MRTSQFLLSTLKETPSDAVVISHQLMLRAGMIRKLASGLYTWLPMGLRVLRKVENVVREEMNAAGALEVLMPAIQPAELWQESGRWVQYGPELLRVKDRHEREFCVGPTHEEVITDLARNELNSYKQLPINMYQIQTKFRDEIRPRFGLMRGREFIMKDAYSFHADQASLQETYDRMHQAYCNVFSRLGLNFRPVQADTGSIGGTGSHEFHVLAESGEDDIAFSNVSDYAANIEKAEAVPREKERAAATEDMRLVDTPNTKTIDALVQGFGLAIEKTIKTLVVHAAEEGKLIALIVRGDHELNEIKAANLEQVASPLQMASEAEIRAAIGAGPGSLGPVNLPIPCIVDRSVALMSDFASGANIEDKHYFGVNWERDLPLPTVADLRNVVAGDPSPDGQGTLEIKRGIEVGHIFQLGTKYSEAMNCQVLGENGKPVTLTMGCYGIGVSRVVAAAIEQNHDERGILWNDALAPFHIALVPLRYETEQVREATDKLYAELTAAGYEVLLDDRDKKTSPGIKFADMELIGIPHRVVVSDRGLAEGNLEYKSRAETEAQAVPLAEILPFLQARISR</sequence>
<name>SYP_ECTM1</name>
<reference key="1">
    <citation type="submission" date="2007-04" db="EMBL/GenBank/DDBJ databases">
        <title>Complete sequence of Pseudomonas mendocina ymp.</title>
        <authorList>
            <consortium name="US DOE Joint Genome Institute"/>
            <person name="Copeland A."/>
            <person name="Lucas S."/>
            <person name="Lapidus A."/>
            <person name="Barry K."/>
            <person name="Glavina del Rio T."/>
            <person name="Dalin E."/>
            <person name="Tice H."/>
            <person name="Pitluck S."/>
            <person name="Kiss H."/>
            <person name="Brettin T."/>
            <person name="Detter J.C."/>
            <person name="Bruce D."/>
            <person name="Han C."/>
            <person name="Schmutz J."/>
            <person name="Larimer F."/>
            <person name="Land M."/>
            <person name="Hauser L."/>
            <person name="Kyrpides N."/>
            <person name="Mikhailova N."/>
            <person name="Hersman L."/>
            <person name="Dubois J."/>
            <person name="Maurice P."/>
            <person name="Richardson P."/>
        </authorList>
    </citation>
    <scope>NUCLEOTIDE SEQUENCE [LARGE SCALE GENOMIC DNA]</scope>
    <source>
        <strain>ymp</strain>
    </source>
</reference>
<keyword id="KW-0030">Aminoacyl-tRNA synthetase</keyword>
<keyword id="KW-0067">ATP-binding</keyword>
<keyword id="KW-0963">Cytoplasm</keyword>
<keyword id="KW-0436">Ligase</keyword>
<keyword id="KW-0547">Nucleotide-binding</keyword>
<keyword id="KW-0648">Protein biosynthesis</keyword>
<feature type="chain" id="PRO_1000069155" description="Proline--tRNA ligase">
    <location>
        <begin position="1"/>
        <end position="571"/>
    </location>
</feature>
<comment type="function">
    <text evidence="1">Catalyzes the attachment of proline to tRNA(Pro) in a two-step reaction: proline is first activated by ATP to form Pro-AMP and then transferred to the acceptor end of tRNA(Pro). As ProRS can inadvertently accommodate and process non-cognate amino acids such as alanine and cysteine, to avoid such errors it has two additional distinct editing activities against alanine. One activity is designated as 'pretransfer' editing and involves the tRNA(Pro)-independent hydrolysis of activated Ala-AMP. The other activity is designated 'posttransfer' editing and involves deacylation of mischarged Ala-tRNA(Pro). The misacylated Cys-tRNA(Pro) is not edited by ProRS.</text>
</comment>
<comment type="catalytic activity">
    <reaction evidence="1">
        <text>tRNA(Pro) + L-proline + ATP = L-prolyl-tRNA(Pro) + AMP + diphosphate</text>
        <dbReference type="Rhea" id="RHEA:14305"/>
        <dbReference type="Rhea" id="RHEA-COMP:9700"/>
        <dbReference type="Rhea" id="RHEA-COMP:9702"/>
        <dbReference type="ChEBI" id="CHEBI:30616"/>
        <dbReference type="ChEBI" id="CHEBI:33019"/>
        <dbReference type="ChEBI" id="CHEBI:60039"/>
        <dbReference type="ChEBI" id="CHEBI:78442"/>
        <dbReference type="ChEBI" id="CHEBI:78532"/>
        <dbReference type="ChEBI" id="CHEBI:456215"/>
        <dbReference type="EC" id="6.1.1.15"/>
    </reaction>
</comment>
<comment type="subunit">
    <text evidence="1">Homodimer.</text>
</comment>
<comment type="subcellular location">
    <subcellularLocation>
        <location evidence="1">Cytoplasm</location>
    </subcellularLocation>
</comment>
<comment type="domain">
    <text evidence="1">Consists of three domains: the N-terminal catalytic domain, the editing domain and the C-terminal anticodon-binding domain.</text>
</comment>
<comment type="similarity">
    <text evidence="1">Belongs to the class-II aminoacyl-tRNA synthetase family. ProS type 1 subfamily.</text>
</comment>
<accession>A4XRQ7</accession>
<evidence type="ECO:0000255" key="1">
    <source>
        <dbReference type="HAMAP-Rule" id="MF_01569"/>
    </source>
</evidence>
<gene>
    <name evidence="1" type="primary">proS</name>
    <name type="ordered locus">Pmen_1258</name>
</gene>
<protein>
    <recommendedName>
        <fullName evidence="1">Proline--tRNA ligase</fullName>
        <ecNumber evidence="1">6.1.1.15</ecNumber>
    </recommendedName>
    <alternativeName>
        <fullName evidence="1">Prolyl-tRNA synthetase</fullName>
        <shortName evidence="1">ProRS</shortName>
    </alternativeName>
</protein>
<organism>
    <name type="scientific">Ectopseudomonas mendocina (strain ymp)</name>
    <name type="common">Pseudomonas mendocina</name>
    <dbReference type="NCBI Taxonomy" id="399739"/>
    <lineage>
        <taxon>Bacteria</taxon>
        <taxon>Pseudomonadati</taxon>
        <taxon>Pseudomonadota</taxon>
        <taxon>Gammaproteobacteria</taxon>
        <taxon>Pseudomonadales</taxon>
        <taxon>Pseudomonadaceae</taxon>
        <taxon>Ectopseudomonas</taxon>
    </lineage>
</organism>
<proteinExistence type="inferred from homology"/>